<gene>
    <name evidence="1" type="primary">ftsB</name>
    <name type="ordered locus">ETA_27020</name>
</gene>
<proteinExistence type="inferred from homology"/>
<dbReference type="EMBL" id="CU468135">
    <property type="protein sequence ID" value="CAO97748.1"/>
    <property type="molecule type" value="Genomic_DNA"/>
</dbReference>
<dbReference type="RefSeq" id="WP_012442405.1">
    <property type="nucleotide sequence ID" value="NC_010694.1"/>
</dbReference>
<dbReference type="SMR" id="B2VFZ8"/>
<dbReference type="STRING" id="465817.ETA_27020"/>
<dbReference type="KEGG" id="eta:ETA_27020"/>
<dbReference type="eggNOG" id="COG2919">
    <property type="taxonomic scope" value="Bacteria"/>
</dbReference>
<dbReference type="HOGENOM" id="CLU_134863_5_2_6"/>
<dbReference type="OrthoDB" id="7061211at2"/>
<dbReference type="Proteomes" id="UP000001726">
    <property type="component" value="Chromosome"/>
</dbReference>
<dbReference type="GO" id="GO:0032153">
    <property type="term" value="C:cell division site"/>
    <property type="evidence" value="ECO:0007669"/>
    <property type="project" value="UniProtKB-UniRule"/>
</dbReference>
<dbReference type="GO" id="GO:0030428">
    <property type="term" value="C:cell septum"/>
    <property type="evidence" value="ECO:0007669"/>
    <property type="project" value="TreeGrafter"/>
</dbReference>
<dbReference type="GO" id="GO:0005886">
    <property type="term" value="C:plasma membrane"/>
    <property type="evidence" value="ECO:0007669"/>
    <property type="project" value="UniProtKB-SubCell"/>
</dbReference>
<dbReference type="GO" id="GO:0043093">
    <property type="term" value="P:FtsZ-dependent cytokinesis"/>
    <property type="evidence" value="ECO:0007669"/>
    <property type="project" value="UniProtKB-UniRule"/>
</dbReference>
<dbReference type="Gene3D" id="1.20.5.400">
    <property type="match status" value="1"/>
</dbReference>
<dbReference type="HAMAP" id="MF_00599">
    <property type="entry name" value="FtsB"/>
    <property type="match status" value="1"/>
</dbReference>
<dbReference type="InterPro" id="IPR023081">
    <property type="entry name" value="Cell_div_FtsB"/>
</dbReference>
<dbReference type="InterPro" id="IPR007060">
    <property type="entry name" value="FtsL/DivIC"/>
</dbReference>
<dbReference type="NCBIfam" id="NF002058">
    <property type="entry name" value="PRK00888.1"/>
    <property type="match status" value="1"/>
</dbReference>
<dbReference type="PANTHER" id="PTHR37485">
    <property type="entry name" value="CELL DIVISION PROTEIN FTSB"/>
    <property type="match status" value="1"/>
</dbReference>
<dbReference type="PANTHER" id="PTHR37485:SF1">
    <property type="entry name" value="CELL DIVISION PROTEIN FTSB"/>
    <property type="match status" value="1"/>
</dbReference>
<dbReference type="Pfam" id="PF04977">
    <property type="entry name" value="DivIC"/>
    <property type="match status" value="1"/>
</dbReference>
<name>FTSB_ERWT9</name>
<organism>
    <name type="scientific">Erwinia tasmaniensis (strain DSM 17950 / CFBP 7177 / CIP 109463 / NCPPB 4357 / Et1/99)</name>
    <dbReference type="NCBI Taxonomy" id="465817"/>
    <lineage>
        <taxon>Bacteria</taxon>
        <taxon>Pseudomonadati</taxon>
        <taxon>Pseudomonadota</taxon>
        <taxon>Gammaproteobacteria</taxon>
        <taxon>Enterobacterales</taxon>
        <taxon>Erwiniaceae</taxon>
        <taxon>Erwinia</taxon>
    </lineage>
</organism>
<feature type="chain" id="PRO_1000129930" description="Cell division protein FtsB">
    <location>
        <begin position="1"/>
        <end position="104"/>
    </location>
</feature>
<feature type="topological domain" description="Cytoplasmic" evidence="1">
    <location>
        <begin position="1"/>
        <end position="3"/>
    </location>
</feature>
<feature type="transmembrane region" description="Helical" evidence="1">
    <location>
        <begin position="4"/>
        <end position="21"/>
    </location>
</feature>
<feature type="topological domain" description="Periplasmic" evidence="1">
    <location>
        <begin position="22"/>
        <end position="104"/>
    </location>
</feature>
<feature type="coiled-coil region" evidence="1">
    <location>
        <begin position="33"/>
        <end position="62"/>
    </location>
</feature>
<keyword id="KW-0131">Cell cycle</keyword>
<keyword id="KW-0132">Cell division</keyword>
<keyword id="KW-0997">Cell inner membrane</keyword>
<keyword id="KW-1003">Cell membrane</keyword>
<keyword id="KW-0175">Coiled coil</keyword>
<keyword id="KW-0472">Membrane</keyword>
<keyword id="KW-1185">Reference proteome</keyword>
<keyword id="KW-0812">Transmembrane</keyword>
<keyword id="KW-1133">Transmembrane helix</keyword>
<sequence length="104" mass="11768">MGKLTLLLLVLLGWLQYSLWLGKNGIHDYTRVDEDVASQQGNNAKLKARNDRLFAEIDDLNGGSEAIEERARNELGMIKPGETFYRLVPDQNRRNAQQGRPASQ</sequence>
<reference key="1">
    <citation type="journal article" date="2008" name="Environ. Microbiol.">
        <title>The genome of Erwinia tasmaniensis strain Et1/99, a non-pathogenic bacterium in the genus Erwinia.</title>
        <authorList>
            <person name="Kube M."/>
            <person name="Migdoll A.M."/>
            <person name="Mueller I."/>
            <person name="Kuhl H."/>
            <person name="Beck A."/>
            <person name="Reinhardt R."/>
            <person name="Geider K."/>
        </authorList>
    </citation>
    <scope>NUCLEOTIDE SEQUENCE [LARGE SCALE GENOMIC DNA]</scope>
    <source>
        <strain>DSM 17950 / CFBP 7177 / CIP 109463 / NCPPB 4357 / Et1/99</strain>
    </source>
</reference>
<comment type="function">
    <text evidence="1">Essential cell division protein. May link together the upstream cell division proteins, which are predominantly cytoplasmic, with the downstream cell division proteins, which are predominantly periplasmic.</text>
</comment>
<comment type="subunit">
    <text evidence="1">Part of a complex composed of FtsB, FtsL and FtsQ.</text>
</comment>
<comment type="subcellular location">
    <subcellularLocation>
        <location evidence="1">Cell inner membrane</location>
        <topology evidence="1">Single-pass type II membrane protein</topology>
    </subcellularLocation>
    <text evidence="1">Localizes to the division septum.</text>
</comment>
<comment type="similarity">
    <text evidence="1">Belongs to the FtsB family.</text>
</comment>
<accession>B2VFZ8</accession>
<evidence type="ECO:0000255" key="1">
    <source>
        <dbReference type="HAMAP-Rule" id="MF_00599"/>
    </source>
</evidence>
<protein>
    <recommendedName>
        <fullName evidence="1">Cell division protein FtsB</fullName>
    </recommendedName>
</protein>